<keyword id="KW-0002">3D-structure</keyword>
<keyword id="KW-0903">Direct protein sequencing</keyword>
<keyword id="KW-0238">DNA-binding</keyword>
<keyword id="KW-0539">Nucleus</keyword>
<keyword id="KW-0597">Phosphoprotein</keyword>
<keyword id="KW-1185">Reference proteome</keyword>
<keyword id="KW-0677">Repeat</keyword>
<keyword id="KW-0804">Transcription</keyword>
<keyword id="KW-0805">Transcription regulation</keyword>
<accession>P32367</accession>
<accession>D6VQC1</accession>
<name>TFC1_YEAST</name>
<proteinExistence type="evidence at protein level"/>
<evidence type="ECO:0000255" key="1"/>
<evidence type="ECO:0000256" key="2">
    <source>
        <dbReference type="SAM" id="MobiDB-lite"/>
    </source>
</evidence>
<evidence type="ECO:0000269" key="3">
    <source>
    </source>
</evidence>
<evidence type="ECO:0000269" key="4">
    <source>
    </source>
</evidence>
<evidence type="ECO:0000269" key="5">
    <source>
    </source>
</evidence>
<evidence type="ECO:0000269" key="6">
    <source>
    </source>
</evidence>
<evidence type="ECO:0000269" key="7">
    <source>
    </source>
</evidence>
<evidence type="ECO:0000305" key="8"/>
<evidence type="ECO:0007744" key="9">
    <source>
    </source>
</evidence>
<evidence type="ECO:0007829" key="10">
    <source>
        <dbReference type="PDB" id="6YJ6"/>
    </source>
</evidence>
<reference key="1">
    <citation type="journal article" date="1991" name="Proc. Natl. Acad. Sci. U.S.A.">
        <title>Isolation of TFC1, a gene encoding one of two DNA-binding subunits of yeast transcription factor tau (TFIIIC).</title>
        <authorList>
            <person name="Swanson R.N."/>
            <person name="Conesa C."/>
            <person name="Lefebvre O."/>
            <person name="Carles C."/>
            <person name="Ruet A."/>
            <person name="Quemeneur E."/>
            <person name="Gagnon J."/>
            <person name="Sentenac A."/>
        </authorList>
    </citation>
    <scope>NUCLEOTIDE SEQUENCE [GENOMIC DNA]</scope>
    <scope>PROTEIN SEQUENCE OF 36-48; 108-118; 194-201; 246-251; 372-376; 405-422 AND 616-631</scope>
</reference>
<reference key="2">
    <citation type="journal article" date="1992" name="J. Biol. Chem.">
        <title>Cloning of TFC1, the Saccharomyces cerevisiae gene encoding the 95-kDa subunit of transcription factor TFIIIC.</title>
        <authorList>
            <person name="Parsons M.C."/>
            <person name="Weil P.A."/>
        </authorList>
    </citation>
    <scope>NUCLEOTIDE SEQUENCE [GENOMIC DNA]</scope>
</reference>
<reference key="3">
    <citation type="journal article" date="1994" name="Yeast">
        <title>Analysis of a 70 kb region on the right arm of yeast chromosome II.</title>
        <authorList>
            <person name="Mannhaupt G."/>
            <person name="Stucka R."/>
            <person name="Ehnle S."/>
            <person name="Vetter I."/>
            <person name="Feldmann H."/>
        </authorList>
    </citation>
    <scope>NUCLEOTIDE SEQUENCE [GENOMIC DNA]</scope>
    <source>
        <strain>ATCC 204508 / S288c</strain>
    </source>
</reference>
<reference key="4">
    <citation type="journal article" date="1994" name="EMBO J.">
        <title>Complete DNA sequence of yeast chromosome II.</title>
        <authorList>
            <person name="Feldmann H."/>
            <person name="Aigle M."/>
            <person name="Aljinovic G."/>
            <person name="Andre B."/>
            <person name="Baclet M.C."/>
            <person name="Barthe C."/>
            <person name="Baur A."/>
            <person name="Becam A.-M."/>
            <person name="Biteau N."/>
            <person name="Boles E."/>
            <person name="Brandt T."/>
            <person name="Brendel M."/>
            <person name="Brueckner M."/>
            <person name="Bussereau F."/>
            <person name="Christiansen C."/>
            <person name="Contreras R."/>
            <person name="Crouzet M."/>
            <person name="Cziepluch C."/>
            <person name="Demolis N."/>
            <person name="Delaveau T."/>
            <person name="Doignon F."/>
            <person name="Domdey H."/>
            <person name="Duesterhus S."/>
            <person name="Dubois E."/>
            <person name="Dujon B."/>
            <person name="El Bakkoury M."/>
            <person name="Entian K.-D."/>
            <person name="Feuermann M."/>
            <person name="Fiers W."/>
            <person name="Fobo G.M."/>
            <person name="Fritz C."/>
            <person name="Gassenhuber J."/>
            <person name="Glansdorff N."/>
            <person name="Goffeau A."/>
            <person name="Grivell L.A."/>
            <person name="de Haan M."/>
            <person name="Hein C."/>
            <person name="Herbert C.J."/>
            <person name="Hollenberg C.P."/>
            <person name="Holmstroem K."/>
            <person name="Jacq C."/>
            <person name="Jacquet M."/>
            <person name="Jauniaux J.-C."/>
            <person name="Jonniaux J.-L."/>
            <person name="Kallesoee T."/>
            <person name="Kiesau P."/>
            <person name="Kirchrath L."/>
            <person name="Koetter P."/>
            <person name="Korol S."/>
            <person name="Liebl S."/>
            <person name="Logghe M."/>
            <person name="Lohan A.J.E."/>
            <person name="Louis E.J."/>
            <person name="Li Z.Y."/>
            <person name="Maat M.J."/>
            <person name="Mallet L."/>
            <person name="Mannhaupt G."/>
            <person name="Messenguy F."/>
            <person name="Miosga T."/>
            <person name="Molemans F."/>
            <person name="Mueller S."/>
            <person name="Nasr F."/>
            <person name="Obermaier B."/>
            <person name="Perea J."/>
            <person name="Pierard A."/>
            <person name="Piravandi E."/>
            <person name="Pohl F.M."/>
            <person name="Pohl T.M."/>
            <person name="Potier S."/>
            <person name="Proft M."/>
            <person name="Purnelle B."/>
            <person name="Ramezani Rad M."/>
            <person name="Rieger M."/>
            <person name="Rose M."/>
            <person name="Schaaff-Gerstenschlaeger I."/>
            <person name="Scherens B."/>
            <person name="Schwarzlose C."/>
            <person name="Skala J."/>
            <person name="Slonimski P.P."/>
            <person name="Smits P.H.M."/>
            <person name="Souciet J.-L."/>
            <person name="Steensma H.Y."/>
            <person name="Stucka R."/>
            <person name="Urrestarazu L.A."/>
            <person name="van der Aart Q.J.M."/>
            <person name="Van Dyck L."/>
            <person name="Vassarotti A."/>
            <person name="Vetter I."/>
            <person name="Vierendeels F."/>
            <person name="Vissers S."/>
            <person name="Wagner G."/>
            <person name="de Wergifosse P."/>
            <person name="Wolfe K.H."/>
            <person name="Zagulski M."/>
            <person name="Zimmermann F.K."/>
            <person name="Mewes H.-W."/>
            <person name="Kleine K."/>
        </authorList>
    </citation>
    <scope>NUCLEOTIDE SEQUENCE [LARGE SCALE GENOMIC DNA]</scope>
    <source>
        <strain>ATCC 204508 / S288c</strain>
    </source>
</reference>
<reference key="5">
    <citation type="journal article" date="2014" name="G3 (Bethesda)">
        <title>The reference genome sequence of Saccharomyces cerevisiae: Then and now.</title>
        <authorList>
            <person name="Engel S.R."/>
            <person name="Dietrich F.S."/>
            <person name="Fisk D.G."/>
            <person name="Binkley G."/>
            <person name="Balakrishnan R."/>
            <person name="Costanzo M.C."/>
            <person name="Dwight S.S."/>
            <person name="Hitz B.C."/>
            <person name="Karra K."/>
            <person name="Nash R.S."/>
            <person name="Weng S."/>
            <person name="Wong E.D."/>
            <person name="Lloyd P."/>
            <person name="Skrzypek M.S."/>
            <person name="Miyasato S.R."/>
            <person name="Simison M."/>
            <person name="Cherry J.M."/>
        </authorList>
    </citation>
    <scope>GENOME REANNOTATION</scope>
    <source>
        <strain>ATCC 204508 / S288c</strain>
    </source>
</reference>
<reference key="6">
    <citation type="journal article" date="1990" name="J. Biol. Chem.">
        <title>Purification and characterization of Saccharomyces cerevisiae transcription factor TFIIIC. Polypeptide composition defined with polyclonal antibodies.</title>
        <authorList>
            <person name="Parsons M.C."/>
            <person name="Weil P.A."/>
        </authorList>
    </citation>
    <scope>IDENTIFICATION IN TFIIIC</scope>
</reference>
<reference key="7">
    <citation type="journal article" date="1993" name="J. Biol. Chem.">
        <title>On the subunit composition, stoichiometry, and phosphorylation of the yeast transcription factor TFIIIC/tau.</title>
        <authorList>
            <person name="Conesa C."/>
            <person name="Swanson R.N."/>
            <person name="Schultz P."/>
            <person name="Oudet P."/>
            <person name="Sentenac A."/>
        </authorList>
    </citation>
    <scope>FUNCTION</scope>
    <scope>INTERACTION WITH TFC3; TFC4 AND TFC6</scope>
    <scope>PHOSPHORYLATION</scope>
</reference>
<reference key="8">
    <citation type="journal article" date="1997" name="Genetics">
        <title>Large scale identification of genes involved in cell surface biosynthesis and architecture in Saccharomyces cerevisiae.</title>
        <authorList>
            <person name="Lussier M."/>
            <person name="White A.-M."/>
            <person name="Sheraton J."/>
            <person name="di Paolo T."/>
            <person name="Treadwell J."/>
            <person name="Southard S.B."/>
            <person name="Horenstein C.I."/>
            <person name="Chen-Weiner J."/>
            <person name="Ram A.F.J."/>
            <person name="Kapteyn J.C."/>
            <person name="Roemer T.W."/>
            <person name="Vo D.H."/>
            <person name="Bondoc D.C."/>
            <person name="Hall J."/>
            <person name="Zhong W.-W."/>
            <person name="Sdicu A.-M."/>
            <person name="Davies J."/>
            <person name="Klis F.M."/>
            <person name="Robbins P.W."/>
            <person name="Bussey H."/>
        </authorList>
    </citation>
    <scope>IDENTIFICATION</scope>
</reference>
<reference key="9">
    <citation type="journal article" date="2003" name="J. Biol. Chem.">
        <title>The tau95 subunit of yeast TFIIIC influences upstream and downstream functions of TFIIIC.DNA complexes.</title>
        <authorList>
            <person name="Jourdain S."/>
            <person name="Acker J."/>
            <person name="Ducrot C."/>
            <person name="Sentenac A."/>
            <person name="Lefebvre O."/>
        </authorList>
    </citation>
    <scope>FUNCTION</scope>
    <scope>INTERACTION WITH TFC3 AND TFC6</scope>
    <scope>MUTAGENESIS OF GLU-447</scope>
</reference>
<reference key="10">
    <citation type="journal article" date="2003" name="Nature">
        <title>Global analysis of protein localization in budding yeast.</title>
        <authorList>
            <person name="Huh W.-K."/>
            <person name="Falvo J.V."/>
            <person name="Gerke L.C."/>
            <person name="Carroll A.S."/>
            <person name="Howson R.W."/>
            <person name="Weissman J.S."/>
            <person name="O'Shea E.K."/>
        </authorList>
    </citation>
    <scope>SUBCELLULAR LOCATION [LARGE SCALE ANALYSIS]</scope>
</reference>
<reference key="11">
    <citation type="journal article" date="2003" name="Nature">
        <title>Global analysis of protein expression in yeast.</title>
        <authorList>
            <person name="Ghaemmaghami S."/>
            <person name="Huh W.-K."/>
            <person name="Bower K."/>
            <person name="Howson R.W."/>
            <person name="Belle A."/>
            <person name="Dephoure N."/>
            <person name="O'Shea E.K."/>
            <person name="Weissman J.S."/>
        </authorList>
    </citation>
    <scope>LEVEL OF PROTEIN EXPRESSION [LARGE SCALE ANALYSIS]</scope>
</reference>
<reference key="12">
    <citation type="journal article" date="2008" name="Mol. Cell. Proteomics">
        <title>A multidimensional chromatography technology for in-depth phosphoproteome analysis.</title>
        <authorList>
            <person name="Albuquerque C.P."/>
            <person name="Smolka M.B."/>
            <person name="Payne S.H."/>
            <person name="Bafna V."/>
            <person name="Eng J."/>
            <person name="Zhou H."/>
        </authorList>
    </citation>
    <scope>PHOSPHORYLATION [LARGE SCALE ANALYSIS] AT SER-617</scope>
    <scope>IDENTIFICATION BY MASS SPECTROMETRY [LARGE SCALE ANALYSIS]</scope>
</reference>
<sequence>MPVEEPLATLSSIPDSSADQAPPLIADEFTLDLPRIPSLELPLNVSTKHSSIQKAIKMCGGIEKVKEAFKEHGPIESQHGLQLYLNDDTDSDGSKSYFNEHPVIGKRVPFRDESVILKVTMPKGTLSKNNNSVKDSIKSLKDSNKLRVTPVSIVDNTIKFREMSDFQIKLDNVPSAREFKSSFGSLEWNNFKSFVNSVPDNDSQPQENIGNLILDRSVKIPSTDFQLPPPPKLSMVGFPLLYKYKANPFAKKKKNGVTEVKGTYIKNYQLFVHDLSDKTVIPSQAHEQVLYDFEVAKKTKVYPGTKSDSKFYESLEECLKILRELFARRPIWVKRHLDGIVPKKIHHTMKIALALISYRFTMGPWRNTYIKFGIDPRSSVEYAQYQTEYFKIERKLLSSPIVKKNVPKPPPLVFESDTPGGIDSRFKFDGKRIPWYLMLQIDLLIGEPNIAEVFHNVEYLDKANELTGWFKELDLVKIRRIVKYELGCMVQGNYEYNKYKLKYFKTMLFVKESMVPENKNSEEGMGVNTNKDADGDINMDAGSQMSSNAIEEDKGIAAGDDFDDNGAITEEPDDAALENEEMDTDQNLKVPASIDDDVDDVDADEEEQESFDVKTASFQDIINKIAKLDPKTAETMKSELKGFVDEVDL</sequence>
<protein>
    <recommendedName>
        <fullName>Transcription factor tau 95 kDa subunit</fullName>
    </recommendedName>
    <alternativeName>
        <fullName>TFIIIC 95 kDa subunit</fullName>
    </alternativeName>
    <alternativeName>
        <fullName>Transcription factor C subunit 1</fullName>
    </alternativeName>
</protein>
<organism>
    <name type="scientific">Saccharomyces cerevisiae (strain ATCC 204508 / S288c)</name>
    <name type="common">Baker's yeast</name>
    <dbReference type="NCBI Taxonomy" id="559292"/>
    <lineage>
        <taxon>Eukaryota</taxon>
        <taxon>Fungi</taxon>
        <taxon>Dikarya</taxon>
        <taxon>Ascomycota</taxon>
        <taxon>Saccharomycotina</taxon>
        <taxon>Saccharomycetes</taxon>
        <taxon>Saccharomycetales</taxon>
        <taxon>Saccharomycetaceae</taxon>
        <taxon>Saccharomyces</taxon>
    </lineage>
</organism>
<comment type="function">
    <text evidence="3 7">TFIIIC mediates tRNA and 5S RNA gene activation by binding to intragenic promoter elements. Upstream of the transcription start site, TFIIIC assembles the initiation complex TFIIIB-TFIIIC-tDNA, which is sufficient for RNA polymerase III recruitment and function. Part of the tauA domain of TFIIIC that binds boxA DNA promoter sites of tRNA and similar genes. Participates in the interconnection of tauA with tauB via its contacts with TFC3 and TFC6. Serves as a scaffold critical for tauA-DNA spatial configuration and tauB-DNA stability.</text>
</comment>
<comment type="subunit">
    <text evidence="3 6 7">Component of the TFIIIC complex composed of TFC1, TFC3, TFC4, TFC6, TFC7 and TFC8. The subunits are organized in two globular domains, tauA and tauB, connected by a proteolysis-sensitive and flexible linker. Interacts with TFC3, TFC4 and TFC6.</text>
</comment>
<comment type="interaction">
    <interactant intactId="EBI-19150">
        <id>P32367</id>
    </interactant>
    <interactant intactId="EBI-33456">
        <id>Q12415</id>
        <label>TFC7</label>
    </interactant>
    <organismsDiffer>false</organismsDiffer>
    <experiments>4</experiments>
</comment>
<comment type="subcellular location">
    <subcellularLocation>
        <location evidence="4">Nucleus</location>
    </subcellularLocation>
</comment>
<comment type="miscellaneous">
    <text evidence="5">Present with 15800 molecules/cell in log phase SD medium.</text>
</comment>
<comment type="similarity">
    <text evidence="8">Belongs to the TFIIIC subunit 5 family.</text>
</comment>
<dbReference type="EMBL" id="M63385">
    <property type="protein sequence ID" value="AAA35144.1"/>
    <property type="molecule type" value="Genomic_DNA"/>
</dbReference>
<dbReference type="EMBL" id="M80922">
    <property type="protein sequence ID" value="AAA35142.1"/>
    <property type="molecule type" value="Genomic_DNA"/>
</dbReference>
<dbReference type="EMBL" id="X78993">
    <property type="protein sequence ID" value="CAA55625.1"/>
    <property type="molecule type" value="Genomic_DNA"/>
</dbReference>
<dbReference type="EMBL" id="Z35992">
    <property type="protein sequence ID" value="CAA85080.1"/>
    <property type="molecule type" value="Genomic_DNA"/>
</dbReference>
<dbReference type="EMBL" id="BK006936">
    <property type="protein sequence ID" value="DAA07241.1"/>
    <property type="molecule type" value="Genomic_DNA"/>
</dbReference>
<dbReference type="PIR" id="A39711">
    <property type="entry name" value="A39711"/>
</dbReference>
<dbReference type="RefSeq" id="NP_009681.3">
    <property type="nucleotide sequence ID" value="NM_001178471.3"/>
</dbReference>
<dbReference type="PDB" id="6YJ6">
    <property type="method" value="EM"/>
    <property type="resolution" value="3.10 A"/>
    <property type="chains" value="B=1-649"/>
</dbReference>
<dbReference type="PDB" id="8FFZ">
    <property type="method" value="EM"/>
    <property type="resolution" value="3.80 A"/>
    <property type="chains" value="D=1-649"/>
</dbReference>
<dbReference type="PDB" id="9GCK">
    <property type="method" value="EM"/>
    <property type="resolution" value="3.70 A"/>
    <property type="chains" value="C=1-593"/>
</dbReference>
<dbReference type="PDBsum" id="6YJ6"/>
<dbReference type="PDBsum" id="8FFZ"/>
<dbReference type="PDBsum" id="9GCK"/>
<dbReference type="EMDB" id="EMD-10817"/>
<dbReference type="EMDB" id="EMD-29071"/>
<dbReference type="EMDB" id="EMD-51231"/>
<dbReference type="SMR" id="P32367"/>
<dbReference type="BioGRID" id="32825">
    <property type="interactions" value="210"/>
</dbReference>
<dbReference type="ComplexPortal" id="CPX-1656">
    <property type="entry name" value="General transcription factor TFIIIC complex"/>
</dbReference>
<dbReference type="DIP" id="DIP-2235N"/>
<dbReference type="FunCoup" id="P32367">
    <property type="interactions" value="60"/>
</dbReference>
<dbReference type="IntAct" id="P32367">
    <property type="interactions" value="17"/>
</dbReference>
<dbReference type="MINT" id="P32367"/>
<dbReference type="STRING" id="4932.YBR123C"/>
<dbReference type="iPTMnet" id="P32367"/>
<dbReference type="PaxDb" id="4932-YBR123C"/>
<dbReference type="PeptideAtlas" id="P32367"/>
<dbReference type="EnsemblFungi" id="YBR123C_mRNA">
    <property type="protein sequence ID" value="YBR123C"/>
    <property type="gene ID" value="YBR123C"/>
</dbReference>
<dbReference type="GeneID" id="852421"/>
<dbReference type="KEGG" id="sce:YBR123C"/>
<dbReference type="AGR" id="SGD:S000000327"/>
<dbReference type="SGD" id="S000000327">
    <property type="gene designation" value="TFC1"/>
</dbReference>
<dbReference type="VEuPathDB" id="FungiDB:YBR123C"/>
<dbReference type="eggNOG" id="KOG2473">
    <property type="taxonomic scope" value="Eukaryota"/>
</dbReference>
<dbReference type="GeneTree" id="ENSGT00390000004458"/>
<dbReference type="HOGENOM" id="CLU_020038_0_0_1"/>
<dbReference type="InParanoid" id="P32367"/>
<dbReference type="OMA" id="PWRNTYI"/>
<dbReference type="OrthoDB" id="5598268at2759"/>
<dbReference type="BioCyc" id="YEAST:G3O-29080-MONOMER"/>
<dbReference type="Reactome" id="R-SCE-76066">
    <property type="pathway name" value="RNA Polymerase III Transcription Initiation From Type 2 Promoter"/>
</dbReference>
<dbReference type="BioGRID-ORCS" id="852421">
    <property type="hits" value="6 hits in 10 CRISPR screens"/>
</dbReference>
<dbReference type="PRO" id="PR:P32367"/>
<dbReference type="Proteomes" id="UP000002311">
    <property type="component" value="Chromosome II"/>
</dbReference>
<dbReference type="RNAct" id="P32367">
    <property type="molecule type" value="protein"/>
</dbReference>
<dbReference type="GO" id="GO:0005654">
    <property type="term" value="C:nucleoplasm"/>
    <property type="evidence" value="ECO:0000304"/>
    <property type="project" value="Reactome"/>
</dbReference>
<dbReference type="GO" id="GO:0005634">
    <property type="term" value="C:nucleus"/>
    <property type="evidence" value="ECO:0000303"/>
    <property type="project" value="ComplexPortal"/>
</dbReference>
<dbReference type="GO" id="GO:0000127">
    <property type="term" value="C:transcription factor TFIIIC complex"/>
    <property type="evidence" value="ECO:0000314"/>
    <property type="project" value="SGD"/>
</dbReference>
<dbReference type="GO" id="GO:0003677">
    <property type="term" value="F:DNA binding"/>
    <property type="evidence" value="ECO:0007669"/>
    <property type="project" value="UniProtKB-KW"/>
</dbReference>
<dbReference type="GO" id="GO:0042791">
    <property type="term" value="P:5S class rRNA transcription by RNA polymerase III"/>
    <property type="evidence" value="ECO:0000314"/>
    <property type="project" value="SGD"/>
</dbReference>
<dbReference type="GO" id="GO:0006383">
    <property type="term" value="P:transcription by RNA polymerase III"/>
    <property type="evidence" value="ECO:0000314"/>
    <property type="project" value="SGD"/>
</dbReference>
<dbReference type="GO" id="GO:0006384">
    <property type="term" value="P:transcription initiation at RNA polymerase III promoter"/>
    <property type="evidence" value="ECO:0000303"/>
    <property type="project" value="ComplexPortal"/>
</dbReference>
<dbReference type="FunFam" id="3.30.200.160:FF:000005">
    <property type="entry name" value="TFC1-like protein"/>
    <property type="match status" value="1"/>
</dbReference>
<dbReference type="Gene3D" id="3.30.200.160">
    <property type="entry name" value="TFIIIC, subcomplex tauA, subunit Sfc1, barrel domain"/>
    <property type="match status" value="1"/>
</dbReference>
<dbReference type="InterPro" id="IPR019136">
    <property type="entry name" value="TF_IIIC_su-5_HTH"/>
</dbReference>
<dbReference type="InterPro" id="IPR040454">
    <property type="entry name" value="TF_IIIC_Tfc1/Sfc1"/>
</dbReference>
<dbReference type="InterPro" id="IPR041499">
    <property type="entry name" value="Tfc1/Sfc1_N"/>
</dbReference>
<dbReference type="InterPro" id="IPR042536">
    <property type="entry name" value="TFIIIC_tauA_Sfc1"/>
</dbReference>
<dbReference type="PANTHER" id="PTHR13230:SF5">
    <property type="entry name" value="GENERAL TRANSCRIPTION FACTOR 3C POLYPEPTIDE 5"/>
    <property type="match status" value="1"/>
</dbReference>
<dbReference type="PANTHER" id="PTHR13230">
    <property type="entry name" value="GENERAL TRANSCRIPTION FACTOR IIIC, POLYPEPTIDE 5"/>
    <property type="match status" value="1"/>
</dbReference>
<dbReference type="Pfam" id="PF09734">
    <property type="entry name" value="Tau95"/>
    <property type="match status" value="1"/>
</dbReference>
<dbReference type="Pfam" id="PF17682">
    <property type="entry name" value="Tau95_N"/>
    <property type="match status" value="1"/>
</dbReference>
<gene>
    <name type="primary">TFC1</name>
    <name type="ordered locus">YBR123C</name>
    <name type="ORF">YBR0919</name>
</gene>
<feature type="chain" id="PRO_0000209717" description="Transcription factor tau 95 kDa subunit">
    <location>
        <begin position="1"/>
        <end position="649"/>
    </location>
</feature>
<feature type="repeat" description="1">
    <location>
        <begin position="221"/>
        <end position="239"/>
    </location>
</feature>
<feature type="repeat" description="2">
    <location>
        <begin position="400"/>
        <end position="419"/>
    </location>
</feature>
<feature type="region of interest" description="Disordered" evidence="2">
    <location>
        <begin position="1"/>
        <end position="21"/>
    </location>
</feature>
<feature type="region of interest" description="2 X repeats, Pro-rich">
    <location>
        <begin position="221"/>
        <end position="419"/>
    </location>
</feature>
<feature type="region of interest" description="Disordered" evidence="2">
    <location>
        <begin position="556"/>
        <end position="612"/>
    </location>
</feature>
<feature type="short sequence motif" description="Nuclear localization signal" evidence="1">
    <location>
        <begin position="296"/>
        <end position="300"/>
    </location>
</feature>
<feature type="compositionally biased region" description="Polar residues" evidence="2">
    <location>
        <begin position="9"/>
        <end position="19"/>
    </location>
</feature>
<feature type="compositionally biased region" description="Acidic residues" evidence="2">
    <location>
        <begin position="560"/>
        <end position="584"/>
    </location>
</feature>
<feature type="compositionally biased region" description="Acidic residues" evidence="2">
    <location>
        <begin position="594"/>
        <end position="610"/>
    </location>
</feature>
<feature type="modified residue" description="Phosphoserine" evidence="9">
    <location>
        <position position="617"/>
    </location>
</feature>
<feature type="mutagenesis site" description="Temperature-sensitive. TFCIII-DNA complexes present a shift in their 5' border, generate slow-migrating TFIIIB-DNA complexes upon stripping TFIIIC by heparin or heat treatment, and allow initiation at downstream sites. TFIIIC-DNA complexes highly unstable at high temperatures." evidence="3">
    <original>E</original>
    <variation>K</variation>
    <location>
        <position position="447"/>
    </location>
</feature>
<feature type="strand" evidence="10">
    <location>
        <begin position="35"/>
        <end position="44"/>
    </location>
</feature>
<feature type="helix" evidence="10">
    <location>
        <begin position="49"/>
        <end position="58"/>
    </location>
</feature>
<feature type="helix" evidence="10">
    <location>
        <begin position="62"/>
        <end position="69"/>
    </location>
</feature>
<feature type="strand" evidence="10">
    <location>
        <begin position="73"/>
        <end position="75"/>
    </location>
</feature>
<feature type="strand" evidence="10">
    <location>
        <begin position="81"/>
        <end position="83"/>
    </location>
</feature>
<feature type="strand" evidence="10">
    <location>
        <begin position="103"/>
        <end position="107"/>
    </location>
</feature>
<feature type="strand" evidence="10">
    <location>
        <begin position="114"/>
        <end position="121"/>
    </location>
</feature>
<feature type="turn" evidence="10">
    <location>
        <begin position="123"/>
        <end position="126"/>
    </location>
</feature>
<feature type="helix" evidence="10">
    <location>
        <begin position="127"/>
        <end position="129"/>
    </location>
</feature>
<feature type="helix" evidence="10">
    <location>
        <begin position="133"/>
        <end position="139"/>
    </location>
</feature>
<feature type="turn" evidence="10">
    <location>
        <begin position="140"/>
        <end position="142"/>
    </location>
</feature>
<feature type="strand" evidence="10">
    <location>
        <begin position="147"/>
        <end position="159"/>
    </location>
</feature>
<feature type="helix" evidence="10">
    <location>
        <begin position="174"/>
        <end position="180"/>
    </location>
</feature>
<feature type="turn" evidence="10">
    <location>
        <begin position="181"/>
        <end position="185"/>
    </location>
</feature>
<feature type="helix" evidence="10">
    <location>
        <begin position="188"/>
        <end position="195"/>
    </location>
</feature>
<feature type="helix" evidence="10">
    <location>
        <begin position="209"/>
        <end position="211"/>
    </location>
</feature>
<feature type="strand" evidence="10">
    <location>
        <begin position="264"/>
        <end position="266"/>
    </location>
</feature>
<feature type="helix" evidence="10">
    <location>
        <begin position="287"/>
        <end position="298"/>
    </location>
</feature>
<feature type="strand" evidence="10">
    <location>
        <begin position="303"/>
        <end position="305"/>
    </location>
</feature>
<feature type="helix" evidence="10">
    <location>
        <begin position="307"/>
        <end position="309"/>
    </location>
</feature>
<feature type="helix" evidence="10">
    <location>
        <begin position="311"/>
        <end position="328"/>
    </location>
</feature>
<feature type="strand" evidence="10">
    <location>
        <begin position="330"/>
        <end position="332"/>
    </location>
</feature>
<feature type="helix" evidence="10">
    <location>
        <begin position="334"/>
        <end position="337"/>
    </location>
</feature>
<feature type="turn" evidence="10">
    <location>
        <begin position="338"/>
        <end position="340"/>
    </location>
</feature>
<feature type="helix" evidence="10">
    <location>
        <begin position="349"/>
        <end position="352"/>
    </location>
</feature>
<feature type="turn" evidence="10">
    <location>
        <begin position="353"/>
        <end position="356"/>
    </location>
</feature>
<feature type="strand" evidence="10">
    <location>
        <begin position="357"/>
        <end position="363"/>
    </location>
</feature>
<feature type="strand" evidence="10">
    <location>
        <begin position="369"/>
        <end position="371"/>
    </location>
</feature>
<feature type="helix" evidence="10">
    <location>
        <begin position="376"/>
        <end position="378"/>
    </location>
</feature>
<feature type="helix" evidence="10">
    <location>
        <begin position="380"/>
        <end position="382"/>
    </location>
</feature>
<feature type="turn" evidence="10">
    <location>
        <begin position="394"/>
        <end position="396"/>
    </location>
</feature>
<feature type="helix" evidence="10">
    <location>
        <begin position="402"/>
        <end position="405"/>
    </location>
</feature>
<feature type="strand" evidence="10">
    <location>
        <begin position="424"/>
        <end position="427"/>
    </location>
</feature>
<feature type="strand" evidence="10">
    <location>
        <begin position="429"/>
        <end position="432"/>
    </location>
</feature>
<feature type="helix" evidence="10">
    <location>
        <begin position="441"/>
        <end position="444"/>
    </location>
</feature>
<feature type="helix" evidence="10">
    <location>
        <begin position="448"/>
        <end position="454"/>
    </location>
</feature>
<feature type="turn" evidence="10">
    <location>
        <begin position="465"/>
        <end position="467"/>
    </location>
</feature>
<feature type="helix" evidence="10">
    <location>
        <begin position="472"/>
        <end position="490"/>
    </location>
</feature>
<feature type="helix" evidence="10">
    <location>
        <begin position="498"/>
        <end position="505"/>
    </location>
</feature>
<feature type="helix" evidence="10">
    <location>
        <begin position="574"/>
        <end position="584"/>
    </location>
</feature>
<feature type="strand" evidence="10">
    <location>
        <begin position="586"/>
        <end position="589"/>
    </location>
</feature>